<protein>
    <recommendedName>
        <fullName evidence="4">L-ornithine N(5)-monooxygenase</fullName>
        <ecNumber evidence="6">1.14.13.196</ecNumber>
    </recommendedName>
    <alternativeName>
        <fullName evidence="4">Coprinoferrin biosynthesis cluster protein cpf2</fullName>
    </alternativeName>
    <alternativeName>
        <fullName evidence="5">L-ornithine N(5)-oxygenase</fullName>
    </alternativeName>
    <alternativeName>
        <fullName evidence="4">Siderophore biosynthesis protein cpf2</fullName>
    </alternativeName>
</protein>
<dbReference type="EC" id="1.14.13.196" evidence="6"/>
<dbReference type="EMBL" id="AACS02000002">
    <property type="protein sequence ID" value="EAU88505.1"/>
    <property type="molecule type" value="Genomic_DNA"/>
</dbReference>
<dbReference type="RefSeq" id="XP_001833232.1">
    <property type="nucleotide sequence ID" value="XM_001833180.2"/>
</dbReference>
<dbReference type="SMR" id="A8NF99"/>
<dbReference type="STRING" id="240176.A8NF99"/>
<dbReference type="GeneID" id="6009727"/>
<dbReference type="KEGG" id="cci:CC1G_04211"/>
<dbReference type="VEuPathDB" id="FungiDB:CC1G_04211"/>
<dbReference type="eggNOG" id="KOG1399">
    <property type="taxonomic scope" value="Eukaryota"/>
</dbReference>
<dbReference type="InParanoid" id="A8NF99"/>
<dbReference type="OMA" id="SFAMYLK"/>
<dbReference type="OrthoDB" id="3519933at2759"/>
<dbReference type="Proteomes" id="UP000001861">
    <property type="component" value="Unassembled WGS sequence"/>
</dbReference>
<dbReference type="GO" id="GO:0004497">
    <property type="term" value="F:monooxygenase activity"/>
    <property type="evidence" value="ECO:0007669"/>
    <property type="project" value="UniProtKB-KW"/>
</dbReference>
<dbReference type="GO" id="GO:0009058">
    <property type="term" value="P:biosynthetic process"/>
    <property type="evidence" value="ECO:0007669"/>
    <property type="project" value="UniProtKB-ARBA"/>
</dbReference>
<dbReference type="GO" id="GO:0006879">
    <property type="term" value="P:intracellular iron ion homeostasis"/>
    <property type="evidence" value="ECO:0007669"/>
    <property type="project" value="TreeGrafter"/>
</dbReference>
<dbReference type="Gene3D" id="3.50.50.60">
    <property type="entry name" value="FAD/NAD(P)-binding domain"/>
    <property type="match status" value="1"/>
</dbReference>
<dbReference type="InterPro" id="IPR036188">
    <property type="entry name" value="FAD/NAD-bd_sf"/>
</dbReference>
<dbReference type="InterPro" id="IPR025700">
    <property type="entry name" value="Lys/Orn_oxygenase"/>
</dbReference>
<dbReference type="PANTHER" id="PTHR42802:SF1">
    <property type="entry name" value="L-ORNITHINE N(5)-MONOOXYGENASE"/>
    <property type="match status" value="1"/>
</dbReference>
<dbReference type="PANTHER" id="PTHR42802">
    <property type="entry name" value="MONOOXYGENASE"/>
    <property type="match status" value="1"/>
</dbReference>
<dbReference type="Pfam" id="PF13434">
    <property type="entry name" value="Lys_Orn_oxgnase"/>
    <property type="match status" value="1"/>
</dbReference>
<dbReference type="SUPFAM" id="SSF51905">
    <property type="entry name" value="FAD/NAD(P)-binding domain"/>
    <property type="match status" value="2"/>
</dbReference>
<accession>A8NF99</accession>
<keyword id="KW-0274">FAD</keyword>
<keyword id="KW-0285">Flavoprotein</keyword>
<keyword id="KW-0503">Monooxygenase</keyword>
<keyword id="KW-0521">NADP</keyword>
<keyword id="KW-0560">Oxidoreductase</keyword>
<keyword id="KW-1185">Reference proteome</keyword>
<feature type="chain" id="PRO_0000452735" description="L-ornithine N(5)-monooxygenase">
    <location>
        <begin position="1"/>
        <end position="542"/>
    </location>
</feature>
<feature type="region of interest" description="Disordered" evidence="2">
    <location>
        <begin position="443"/>
        <end position="472"/>
    </location>
</feature>
<feature type="compositionally biased region" description="Low complexity" evidence="2">
    <location>
        <begin position="447"/>
        <end position="472"/>
    </location>
</feature>
<feature type="binding site" evidence="1">
    <location>
        <begin position="45"/>
        <end position="53"/>
    </location>
    <ligand>
        <name>FAD</name>
        <dbReference type="ChEBI" id="CHEBI:57692"/>
    </ligand>
</feature>
<feature type="binding site" evidence="1">
    <location>
        <position position="64"/>
    </location>
    <ligand>
        <name>FAD</name>
        <dbReference type="ChEBI" id="CHEBI:57692"/>
    </ligand>
</feature>
<feature type="binding site" evidence="1">
    <location>
        <position position="69"/>
    </location>
    <ligand>
        <name>substrate</name>
    </ligand>
</feature>
<feature type="binding site" evidence="1">
    <location>
        <begin position="218"/>
        <end position="221"/>
    </location>
    <ligand>
        <name>NADP(+)</name>
        <dbReference type="ChEBI" id="CHEBI:58349"/>
    </ligand>
</feature>
<feature type="binding site" evidence="1">
    <location>
        <begin position="263"/>
        <end position="266"/>
    </location>
    <ligand>
        <name>substrate</name>
    </ligand>
</feature>
<feature type="binding site" evidence="1">
    <location>
        <begin position="294"/>
        <end position="296"/>
    </location>
    <ligand>
        <name>NADP(+)</name>
        <dbReference type="ChEBI" id="CHEBI:58349"/>
    </ligand>
</feature>
<feature type="binding site" evidence="1">
    <location>
        <position position="294"/>
    </location>
    <ligand>
        <name>substrate</name>
    </ligand>
</feature>
<feature type="binding site" evidence="1">
    <location>
        <begin position="518"/>
        <end position="520"/>
    </location>
    <ligand>
        <name>FAD</name>
        <dbReference type="ChEBI" id="CHEBI:57692"/>
    </ligand>
</feature>
<feature type="binding site" evidence="1">
    <location>
        <position position="521"/>
    </location>
    <ligand>
        <name>substrate</name>
    </ligand>
</feature>
<organism>
    <name type="scientific">Coprinopsis cinerea (strain Okayama-7 / 130 / ATCC MYA-4618 / FGSC 9003)</name>
    <name type="common">Inky cap fungus</name>
    <name type="synonym">Hormographiella aspergillata</name>
    <dbReference type="NCBI Taxonomy" id="240176"/>
    <lineage>
        <taxon>Eukaryota</taxon>
        <taxon>Fungi</taxon>
        <taxon>Dikarya</taxon>
        <taxon>Basidiomycota</taxon>
        <taxon>Agaricomycotina</taxon>
        <taxon>Agaricomycetes</taxon>
        <taxon>Agaricomycetidae</taxon>
        <taxon>Agaricales</taxon>
        <taxon>Agaricineae</taxon>
        <taxon>Psathyrellaceae</taxon>
        <taxon>Coprinopsis</taxon>
    </lineage>
</organism>
<reference key="1">
    <citation type="journal article" date="2010" name="Proc. Natl. Acad. Sci. U.S.A.">
        <title>Insights into evolution of multicellular fungi from the assembled chromosomes of the mushroom Coprinopsis cinerea (Coprinus cinereus).</title>
        <authorList>
            <person name="Stajich J.E."/>
            <person name="Wilke S.K."/>
            <person name="Ahren D."/>
            <person name="Au C.H."/>
            <person name="Birren B.W."/>
            <person name="Borodovsky M."/>
            <person name="Burns C."/>
            <person name="Canbaeck B."/>
            <person name="Casselton L.A."/>
            <person name="Cheng C.K."/>
            <person name="Deng J."/>
            <person name="Dietrich F.S."/>
            <person name="Fargo D.C."/>
            <person name="Farman M.L."/>
            <person name="Gathman A.C."/>
            <person name="Goldberg J."/>
            <person name="Guigo R."/>
            <person name="Hoegger P.J."/>
            <person name="Hooker J.B."/>
            <person name="Huggins A."/>
            <person name="James T.Y."/>
            <person name="Kamada T."/>
            <person name="Kilaru S."/>
            <person name="Kodira C."/>
            <person name="Kuees U."/>
            <person name="Kupfer D."/>
            <person name="Kwan H.S."/>
            <person name="Lomsadze A."/>
            <person name="Li W."/>
            <person name="Lilly W.W."/>
            <person name="Ma L.-J."/>
            <person name="Mackey A.J."/>
            <person name="Manning G."/>
            <person name="Martin F."/>
            <person name="Muraguchi H."/>
            <person name="Natvig D.O."/>
            <person name="Palmerini H."/>
            <person name="Ramesh M.A."/>
            <person name="Rehmeyer C.J."/>
            <person name="Roe B.A."/>
            <person name="Shenoy N."/>
            <person name="Stanke M."/>
            <person name="Ter-Hovhannisyan V."/>
            <person name="Tunlid A."/>
            <person name="Velagapudi R."/>
            <person name="Vision T.J."/>
            <person name="Zeng Q."/>
            <person name="Zolan M.E."/>
            <person name="Pukkila P.J."/>
        </authorList>
    </citation>
    <scope>NUCLEOTIDE SEQUENCE [LARGE SCALE GENOMIC DNA]</scope>
    <source>
        <strain>Okayama-7 / 130 / ATCC MYA-4618 / FGSC 9003</strain>
    </source>
</reference>
<reference key="2">
    <citation type="journal article" date="2019" name="Org. Lett.">
        <title>Genomic mushroom hunting decrypts coprinoferrin, a siderophore secondary metabolite vital to fungal cell development.</title>
        <authorList>
            <person name="Tsunematsu Y."/>
            <person name="Takanishi J."/>
            <person name="Asai S."/>
            <person name="Masuya T."/>
            <person name="Nakazawa T."/>
            <person name="Watanabe K."/>
        </authorList>
    </citation>
    <scope>FUNCTION</scope>
</reference>
<gene>
    <name evidence="4" type="primary">cpf2</name>
    <name type="ORF">CC1G_04211</name>
</gene>
<proteinExistence type="inferred from homology"/>
<evidence type="ECO:0000250" key="1">
    <source>
        <dbReference type="UniProtKB" id="E9QYP0"/>
    </source>
</evidence>
<evidence type="ECO:0000256" key="2">
    <source>
        <dbReference type="SAM" id="MobiDB-lite"/>
    </source>
</evidence>
<evidence type="ECO:0000269" key="3">
    <source>
    </source>
</evidence>
<evidence type="ECO:0000303" key="4">
    <source>
    </source>
</evidence>
<evidence type="ECO:0000305" key="5"/>
<evidence type="ECO:0000305" key="6">
    <source>
    </source>
</evidence>
<sequence length="542" mass="59780">MSADDVVYDLVGLGFGPANIAIGAALTEKWQQDPTFSIKNTLFIEKHEVFRWHPGMLLPDAKMQISFLKDLATLRTPNSPYTFLSYLHSEDRLLSFINRGSTVPSRKEYSDYLAWAAQKVQDNGVKVKFGHEIIALDDGPDGTIEVRYRNVRTQEETLIRARDLIIAPGGTPCIPDFLQPFVNHPRVSHSSSYALKIGDMFDSLNHLSRPLRVAIIGSGQSAAEVTIDVRNRLASIPSTGRHEVDMLIRKGSLKPSDDSPFANEIFDPASTDAWFSTGSKHLRDAILAEYKQTNYSVVNPRTLEALYEIIYGQRLNAAVSRRTNVEEPSDPVINIKPYTSVLSIQTVGSQGERVRGELLLSPEGASASKDEGFVMVTKHMMTGAESQTNYDVILYATGYQRTAWVELFKNTGIAKHFGITPSTSKVVLRPSADLVGGRQHQEFFHDSSPSTASSSTVSTPPTSPETSRFSSPISSRIVSQDLYLSRSYQLLPKDGENTLRPRVYLQGVEEATHGLSDTLLSVLGVRAGEVVADLASRYHSSA</sequence>
<comment type="function">
    <text evidence="3 6">L-ornithine N(5)-monooxygenase; part of the gene cluster that mediates the biosynthesis of coprinoferrin, an acylated tripeptide hydroxamate siderophore (PubMed:31496254). The biosynthesis of coprinoferrin depends on the hydroxylation of ornithine to N(5)-hydroxyornithine, catalyzed by the monooxygenase cpf2 (PubMed:31496254). The second step, the acylation of N(5)-hydroxy-L-ornithine to yield N(5)-hexanoyl-N(5)-hydroxyl-L-ornithine is catalyzed by a not yet identified acyltransferase (Probable). Finally, assembly of coprinoferrin is catalyzed by the nonribosomal peptide synthase (NRPS) cpf1 via amide bond formation between three N(5)-hexanoyl-N(5)-hydroxyl-L-ornithine molecules to release the linear trimer (PubMed:31496254). Interestingly, proteins seemingly not directly related to biosynthesis, such as transcription factors, replication factors, and autophagy-related proteins, are conserved among the clusters homologous to the coprinoferrin cluster, suggesting that the cluster may also play developmental and cell biological functions (Probable).</text>
</comment>
<comment type="catalytic activity">
    <reaction evidence="1">
        <text>L-ornithine + NADPH + O2 = N(5)-hydroxy-L-ornithine + NADP(+) + H2O</text>
        <dbReference type="Rhea" id="RHEA:41508"/>
        <dbReference type="ChEBI" id="CHEBI:15377"/>
        <dbReference type="ChEBI" id="CHEBI:15379"/>
        <dbReference type="ChEBI" id="CHEBI:46911"/>
        <dbReference type="ChEBI" id="CHEBI:57783"/>
        <dbReference type="ChEBI" id="CHEBI:58349"/>
        <dbReference type="ChEBI" id="CHEBI:78275"/>
        <dbReference type="EC" id="1.14.13.196"/>
    </reaction>
</comment>
<comment type="catalytic activity">
    <reaction evidence="1">
        <text>L-ornithine + NADH + O2 = N(5)-hydroxy-L-ornithine + NAD(+) + H2O</text>
        <dbReference type="Rhea" id="RHEA:41512"/>
        <dbReference type="ChEBI" id="CHEBI:15377"/>
        <dbReference type="ChEBI" id="CHEBI:15379"/>
        <dbReference type="ChEBI" id="CHEBI:46911"/>
        <dbReference type="ChEBI" id="CHEBI:57540"/>
        <dbReference type="ChEBI" id="CHEBI:57945"/>
        <dbReference type="ChEBI" id="CHEBI:78275"/>
        <dbReference type="EC" id="1.14.13.196"/>
    </reaction>
</comment>
<comment type="cofactor">
    <cofactor evidence="1">
        <name>FAD</name>
        <dbReference type="ChEBI" id="CHEBI:57692"/>
    </cofactor>
    <text evidence="1">Binds 1 FAD per subunit.</text>
</comment>
<comment type="pathway">
    <text evidence="6">Siderophore biosynthesis.</text>
</comment>
<comment type="subunit">
    <text evidence="1">Homotetramer.</text>
</comment>
<comment type="similarity">
    <text evidence="5">Belongs to the lysine N(6)-hydroxylase/L-ornithine N(5)-oxygenase family.</text>
</comment>
<name>CPF2_COPC7</name>